<dbReference type="EC" id="6.3.2.-"/>
<dbReference type="EMBL" id="AP003406">
    <property type="protein sequence ID" value="BAB92590.1"/>
    <property type="molecule type" value="Genomic_DNA"/>
</dbReference>
<dbReference type="EMBL" id="AP008207">
    <property type="protein sequence ID" value="BAF06381.1"/>
    <property type="molecule type" value="Genomic_DNA"/>
</dbReference>
<dbReference type="EMBL" id="AP014957">
    <property type="protein sequence ID" value="BAS74687.1"/>
    <property type="molecule type" value="Genomic_DNA"/>
</dbReference>
<dbReference type="EMBL" id="CM000138">
    <property type="protein sequence ID" value="EAZ13782.1"/>
    <property type="molecule type" value="Genomic_DNA"/>
</dbReference>
<dbReference type="EMBL" id="AK063368">
    <property type="protein sequence ID" value="BAG88666.1"/>
    <property type="molecule type" value="mRNA"/>
</dbReference>
<dbReference type="RefSeq" id="XP_015643474.1">
    <property type="nucleotide sequence ID" value="XM_015787988.1"/>
</dbReference>
<dbReference type="SMR" id="Q8LQM5"/>
<dbReference type="FunCoup" id="Q8LQM5">
    <property type="interactions" value="325"/>
</dbReference>
<dbReference type="STRING" id="39947.Q8LQM5"/>
<dbReference type="PaxDb" id="39947-Q8LQM5"/>
<dbReference type="EnsemblPlants" id="Os01t0785400-01">
    <property type="protein sequence ID" value="Os01t0785400-01"/>
    <property type="gene ID" value="Os01g0785400"/>
</dbReference>
<dbReference type="Gramene" id="Os01t0785400-01">
    <property type="protein sequence ID" value="Os01t0785400-01"/>
    <property type="gene ID" value="Os01g0785400"/>
</dbReference>
<dbReference type="KEGG" id="dosa:Os01g0785400"/>
<dbReference type="eggNOG" id="ENOG502QQAN">
    <property type="taxonomic scope" value="Eukaryota"/>
</dbReference>
<dbReference type="HOGENOM" id="CLU_016249_2_1_1"/>
<dbReference type="InParanoid" id="Q8LQM5"/>
<dbReference type="OMA" id="GHKQWIH"/>
<dbReference type="OrthoDB" id="10004661at2759"/>
<dbReference type="Proteomes" id="UP000000763">
    <property type="component" value="Chromosome 1"/>
</dbReference>
<dbReference type="Proteomes" id="UP000007752">
    <property type="component" value="Chromosome 1"/>
</dbReference>
<dbReference type="Proteomes" id="UP000059680">
    <property type="component" value="Chromosome 1"/>
</dbReference>
<dbReference type="GO" id="GO:0005737">
    <property type="term" value="C:cytoplasm"/>
    <property type="evidence" value="ECO:0000318"/>
    <property type="project" value="GO_Central"/>
</dbReference>
<dbReference type="GO" id="GO:0016881">
    <property type="term" value="F:acid-amino acid ligase activity"/>
    <property type="evidence" value="ECO:0000318"/>
    <property type="project" value="GO_Central"/>
</dbReference>
<dbReference type="GO" id="GO:0009733">
    <property type="term" value="P:response to auxin"/>
    <property type="evidence" value="ECO:0000305"/>
    <property type="project" value="Gramene"/>
</dbReference>
<dbReference type="GO" id="GO:0009416">
    <property type="term" value="P:response to light stimulus"/>
    <property type="evidence" value="ECO:0000305"/>
    <property type="project" value="Gramene"/>
</dbReference>
<dbReference type="InterPro" id="IPR004993">
    <property type="entry name" value="GH3"/>
</dbReference>
<dbReference type="InterPro" id="IPR055378">
    <property type="entry name" value="GH3_C"/>
</dbReference>
<dbReference type="InterPro" id="IPR055377">
    <property type="entry name" value="GH3_M"/>
</dbReference>
<dbReference type="PANTHER" id="PTHR31901">
    <property type="entry name" value="GH3 DOMAIN-CONTAINING PROTEIN"/>
    <property type="match status" value="1"/>
</dbReference>
<dbReference type="PANTHER" id="PTHR31901:SF9">
    <property type="entry name" value="GH3 DOMAIN-CONTAINING PROTEIN"/>
    <property type="match status" value="1"/>
</dbReference>
<dbReference type="Pfam" id="PF03321">
    <property type="entry name" value="GH3"/>
    <property type="match status" value="1"/>
</dbReference>
<dbReference type="Pfam" id="PF23572">
    <property type="entry name" value="GH3_C"/>
    <property type="match status" value="1"/>
</dbReference>
<dbReference type="Pfam" id="PF23571">
    <property type="entry name" value="GH3_M"/>
    <property type="match status" value="1"/>
</dbReference>
<proteinExistence type="evidence at transcript level"/>
<comment type="function">
    <text evidence="1">May catalyze the synthesis of indole-3-acetic acid (IAA)-amino acid conjugates, providing a mechanism for the plant to cope with the presence of excess auxin.</text>
</comment>
<comment type="tissue specificity">
    <text evidence="2">Expressed in flowers.</text>
</comment>
<comment type="induction">
    <text evidence="2">By auxin.</text>
</comment>
<comment type="similarity">
    <text evidence="3">Belongs to the IAA-amido conjugating enzyme family.</text>
</comment>
<reference key="1">
    <citation type="journal article" date="2002" name="Nature">
        <title>The genome sequence and structure of rice chromosome 1.</title>
        <authorList>
            <person name="Sasaki T."/>
            <person name="Matsumoto T."/>
            <person name="Yamamoto K."/>
            <person name="Sakata K."/>
            <person name="Baba T."/>
            <person name="Katayose Y."/>
            <person name="Wu J."/>
            <person name="Niimura Y."/>
            <person name="Cheng Z."/>
            <person name="Nagamura Y."/>
            <person name="Antonio B.A."/>
            <person name="Kanamori H."/>
            <person name="Hosokawa S."/>
            <person name="Masukawa M."/>
            <person name="Arikawa K."/>
            <person name="Chiden Y."/>
            <person name="Hayashi M."/>
            <person name="Okamoto M."/>
            <person name="Ando T."/>
            <person name="Aoki H."/>
            <person name="Arita K."/>
            <person name="Hamada M."/>
            <person name="Harada C."/>
            <person name="Hijishita S."/>
            <person name="Honda M."/>
            <person name="Ichikawa Y."/>
            <person name="Idonuma A."/>
            <person name="Iijima M."/>
            <person name="Ikeda M."/>
            <person name="Ikeno M."/>
            <person name="Ito S."/>
            <person name="Ito T."/>
            <person name="Ito Y."/>
            <person name="Ito Y."/>
            <person name="Iwabuchi A."/>
            <person name="Kamiya K."/>
            <person name="Karasawa W."/>
            <person name="Katagiri S."/>
            <person name="Kikuta A."/>
            <person name="Kobayashi N."/>
            <person name="Kono I."/>
            <person name="Machita K."/>
            <person name="Maehara T."/>
            <person name="Mizuno H."/>
            <person name="Mizubayashi T."/>
            <person name="Mukai Y."/>
            <person name="Nagasaki H."/>
            <person name="Nakashima M."/>
            <person name="Nakama Y."/>
            <person name="Nakamichi Y."/>
            <person name="Nakamura M."/>
            <person name="Namiki N."/>
            <person name="Negishi M."/>
            <person name="Ohta I."/>
            <person name="Ono N."/>
            <person name="Saji S."/>
            <person name="Sakai K."/>
            <person name="Shibata M."/>
            <person name="Shimokawa T."/>
            <person name="Shomura A."/>
            <person name="Song J."/>
            <person name="Takazaki Y."/>
            <person name="Terasawa K."/>
            <person name="Tsuji K."/>
            <person name="Waki K."/>
            <person name="Yamagata H."/>
            <person name="Yamane H."/>
            <person name="Yoshiki S."/>
            <person name="Yoshihara R."/>
            <person name="Yukawa K."/>
            <person name="Zhong H."/>
            <person name="Iwama H."/>
            <person name="Endo T."/>
            <person name="Ito H."/>
            <person name="Hahn J.H."/>
            <person name="Kim H.-I."/>
            <person name="Eun M.-Y."/>
            <person name="Yano M."/>
            <person name="Jiang J."/>
            <person name="Gojobori T."/>
        </authorList>
    </citation>
    <scope>NUCLEOTIDE SEQUENCE [LARGE SCALE GENOMIC DNA]</scope>
    <source>
        <strain>cv. Nipponbare</strain>
    </source>
</reference>
<reference key="2">
    <citation type="journal article" date="2005" name="Nature">
        <title>The map-based sequence of the rice genome.</title>
        <authorList>
            <consortium name="International rice genome sequencing project (IRGSP)"/>
        </authorList>
    </citation>
    <scope>NUCLEOTIDE SEQUENCE [LARGE SCALE GENOMIC DNA]</scope>
    <source>
        <strain>cv. Nipponbare</strain>
    </source>
</reference>
<reference key="3">
    <citation type="journal article" date="2008" name="Nucleic Acids Res.">
        <title>The rice annotation project database (RAP-DB): 2008 update.</title>
        <authorList>
            <consortium name="The rice annotation project (RAP)"/>
        </authorList>
    </citation>
    <scope>GENOME REANNOTATION</scope>
    <source>
        <strain>cv. Nipponbare</strain>
    </source>
</reference>
<reference key="4">
    <citation type="journal article" date="2013" name="Rice">
        <title>Improvement of the Oryza sativa Nipponbare reference genome using next generation sequence and optical map data.</title>
        <authorList>
            <person name="Kawahara Y."/>
            <person name="de la Bastide M."/>
            <person name="Hamilton J.P."/>
            <person name="Kanamori H."/>
            <person name="McCombie W.R."/>
            <person name="Ouyang S."/>
            <person name="Schwartz D.C."/>
            <person name="Tanaka T."/>
            <person name="Wu J."/>
            <person name="Zhou S."/>
            <person name="Childs K.L."/>
            <person name="Davidson R.M."/>
            <person name="Lin H."/>
            <person name="Quesada-Ocampo L."/>
            <person name="Vaillancourt B."/>
            <person name="Sakai H."/>
            <person name="Lee S.S."/>
            <person name="Kim J."/>
            <person name="Numa H."/>
            <person name="Itoh T."/>
            <person name="Buell C.R."/>
            <person name="Matsumoto T."/>
        </authorList>
    </citation>
    <scope>GENOME REANNOTATION</scope>
    <source>
        <strain>cv. Nipponbare</strain>
    </source>
</reference>
<reference key="5">
    <citation type="journal article" date="2005" name="PLoS Biol.">
        <title>The genomes of Oryza sativa: a history of duplications.</title>
        <authorList>
            <person name="Yu J."/>
            <person name="Wang J."/>
            <person name="Lin W."/>
            <person name="Li S."/>
            <person name="Li H."/>
            <person name="Zhou J."/>
            <person name="Ni P."/>
            <person name="Dong W."/>
            <person name="Hu S."/>
            <person name="Zeng C."/>
            <person name="Zhang J."/>
            <person name="Zhang Y."/>
            <person name="Li R."/>
            <person name="Xu Z."/>
            <person name="Li S."/>
            <person name="Li X."/>
            <person name="Zheng H."/>
            <person name="Cong L."/>
            <person name="Lin L."/>
            <person name="Yin J."/>
            <person name="Geng J."/>
            <person name="Li G."/>
            <person name="Shi J."/>
            <person name="Liu J."/>
            <person name="Lv H."/>
            <person name="Li J."/>
            <person name="Wang J."/>
            <person name="Deng Y."/>
            <person name="Ran L."/>
            <person name="Shi X."/>
            <person name="Wang X."/>
            <person name="Wu Q."/>
            <person name="Li C."/>
            <person name="Ren X."/>
            <person name="Wang J."/>
            <person name="Wang X."/>
            <person name="Li D."/>
            <person name="Liu D."/>
            <person name="Zhang X."/>
            <person name="Ji Z."/>
            <person name="Zhao W."/>
            <person name="Sun Y."/>
            <person name="Zhang Z."/>
            <person name="Bao J."/>
            <person name="Han Y."/>
            <person name="Dong L."/>
            <person name="Ji J."/>
            <person name="Chen P."/>
            <person name="Wu S."/>
            <person name="Liu J."/>
            <person name="Xiao Y."/>
            <person name="Bu D."/>
            <person name="Tan J."/>
            <person name="Yang L."/>
            <person name="Ye C."/>
            <person name="Zhang J."/>
            <person name="Xu J."/>
            <person name="Zhou Y."/>
            <person name="Yu Y."/>
            <person name="Zhang B."/>
            <person name="Zhuang S."/>
            <person name="Wei H."/>
            <person name="Liu B."/>
            <person name="Lei M."/>
            <person name="Yu H."/>
            <person name="Li Y."/>
            <person name="Xu H."/>
            <person name="Wei S."/>
            <person name="He X."/>
            <person name="Fang L."/>
            <person name="Zhang Z."/>
            <person name="Zhang Y."/>
            <person name="Huang X."/>
            <person name="Su Z."/>
            <person name="Tong W."/>
            <person name="Li J."/>
            <person name="Tong Z."/>
            <person name="Li S."/>
            <person name="Ye J."/>
            <person name="Wang L."/>
            <person name="Fang L."/>
            <person name="Lei T."/>
            <person name="Chen C.-S."/>
            <person name="Chen H.-C."/>
            <person name="Xu Z."/>
            <person name="Li H."/>
            <person name="Huang H."/>
            <person name="Zhang F."/>
            <person name="Xu H."/>
            <person name="Li N."/>
            <person name="Zhao C."/>
            <person name="Li S."/>
            <person name="Dong L."/>
            <person name="Huang Y."/>
            <person name="Li L."/>
            <person name="Xi Y."/>
            <person name="Qi Q."/>
            <person name="Li W."/>
            <person name="Zhang B."/>
            <person name="Hu W."/>
            <person name="Zhang Y."/>
            <person name="Tian X."/>
            <person name="Jiao Y."/>
            <person name="Liang X."/>
            <person name="Jin J."/>
            <person name="Gao L."/>
            <person name="Zheng W."/>
            <person name="Hao B."/>
            <person name="Liu S.-M."/>
            <person name="Wang W."/>
            <person name="Yuan L."/>
            <person name="Cao M."/>
            <person name="McDermott J."/>
            <person name="Samudrala R."/>
            <person name="Wang J."/>
            <person name="Wong G.K.-S."/>
            <person name="Yang H."/>
        </authorList>
    </citation>
    <scope>NUCLEOTIDE SEQUENCE [LARGE SCALE GENOMIC DNA]</scope>
    <source>
        <strain>cv. Nipponbare</strain>
    </source>
</reference>
<reference key="6">
    <citation type="journal article" date="2003" name="Science">
        <title>Collection, mapping, and annotation of over 28,000 cDNA clones from japonica rice.</title>
        <authorList>
            <consortium name="The rice full-length cDNA consortium"/>
        </authorList>
    </citation>
    <scope>NUCLEOTIDE SEQUENCE [LARGE SCALE MRNA]</scope>
    <source>
        <strain>cv. Nipponbare</strain>
    </source>
</reference>
<reference key="7">
    <citation type="journal article" date="2006" name="Funct. Integr. Genomics">
        <title>The auxin-responsive GH3 gene family in rice (Oryza sativa).</title>
        <authorList>
            <person name="Jain M."/>
            <person name="Kaur N."/>
            <person name="Tyagi A.K."/>
            <person name="Khurana J.P."/>
        </authorList>
    </citation>
    <scope>TISSUE SPECIFICITY</scope>
    <scope>INDUCTION</scope>
    <scope>NOMENCLATURE</scope>
</reference>
<gene>
    <name type="primary">GH3.1</name>
    <name type="ordered locus">Os01g0785400</name>
    <name type="ordered locus">LOC_Os01g57610</name>
    <name type="ORF">B1070A12.26</name>
    <name evidence="4" type="ORF">OsJ_03707</name>
</gene>
<keyword id="KW-0436">Ligase</keyword>
<keyword id="KW-1185">Reference proteome</keyword>
<name>GH31_ORYSJ</name>
<evidence type="ECO:0000250" key="1"/>
<evidence type="ECO:0000269" key="2">
    <source>
    </source>
</evidence>
<evidence type="ECO:0000305" key="3"/>
<evidence type="ECO:0000312" key="4">
    <source>
        <dbReference type="EMBL" id="EAZ13782.1"/>
    </source>
</evidence>
<organism>
    <name type="scientific">Oryza sativa subsp. japonica</name>
    <name type="common">Rice</name>
    <dbReference type="NCBI Taxonomy" id="39947"/>
    <lineage>
        <taxon>Eukaryota</taxon>
        <taxon>Viridiplantae</taxon>
        <taxon>Streptophyta</taxon>
        <taxon>Embryophyta</taxon>
        <taxon>Tracheophyta</taxon>
        <taxon>Spermatophyta</taxon>
        <taxon>Magnoliopsida</taxon>
        <taxon>Liliopsida</taxon>
        <taxon>Poales</taxon>
        <taxon>Poaceae</taxon>
        <taxon>BOP clade</taxon>
        <taxon>Oryzoideae</taxon>
        <taxon>Oryzeae</taxon>
        <taxon>Oryzinae</taxon>
        <taxon>Oryza</taxon>
        <taxon>Oryza sativa</taxon>
    </lineage>
</organism>
<feature type="chain" id="PRO_0000203578" description="Probable indole-3-acetic acid-amido synthetase GH3.1">
    <location>
        <begin position="1"/>
        <end position="610"/>
    </location>
</feature>
<protein>
    <recommendedName>
        <fullName>Probable indole-3-acetic acid-amido synthetase GH3.1</fullName>
        <ecNumber>6.3.2.-</ecNumber>
    </recommendedName>
    <alternativeName>
        <fullName>Auxin-responsive GH3-like protein 1</fullName>
        <shortName>OsGH3-1</shortName>
    </alternativeName>
</protein>
<accession>Q8LQM5</accession>
<accession>Q0JIP7</accession>
<sequence>MPEAPTAKTAPAYGYAPGAHAEALEFIEHVTANAGQVQRRVLGEILAQNAPAEYLRRYGIPGSPDVVDAFRRLVPLVTYEGLQPDILRIANGDTSPIFSGKPISEFLTSSGTSGGERKLMPTIADEMNRRSLLYSLLMPVMSQSVSGLDKGKAMYLLFVKAESRTPGGLAARPVLTSYYRSRQFLDRPRDPYTSYTSPDEAILCVDSYQSMYAQLLCGLVHRADVLRVGAVFASGFLRAIHFLEKHWARLCHDIRTGELDPEITDRVVRDAVGRVLRADPALADAIEDECARASWEGIIRRLWPRTKYIDVIVTGTMSQYIPTLEFYGGGLPLTCTMYASSECYFGLNLNPMCKPSDVAYTLIPTMCYYEFLPVNCNNATAEASHRDLVDLVDVKLGHEYELVVTTYSGLYRYRVGDVLRVAGFKNKAPMFSFVRRQNVALSVDSDKTDETELHAAVSGAVQHLAPFGASLVEYTSYADAATIPGHYVLFWELRAGSTAVPASVFEECCLSVEEALNSVYRQGRACDRSIGPLEIRVVAEGTFDKLMDYAISRGASINQYKAPRCVRPGPVVELLDARVQGKYFSPKCPKWSPGNKQWNKSKDLVGKGDA</sequence>